<feature type="chain" id="PRO_1000020674" description="tRNA dimethylallyltransferase">
    <location>
        <begin position="1"/>
        <end position="294"/>
    </location>
</feature>
<feature type="region of interest" description="Interaction with substrate tRNA" evidence="1">
    <location>
        <begin position="35"/>
        <end position="38"/>
    </location>
</feature>
<feature type="binding site" evidence="1">
    <location>
        <begin position="10"/>
        <end position="17"/>
    </location>
    <ligand>
        <name>ATP</name>
        <dbReference type="ChEBI" id="CHEBI:30616"/>
    </ligand>
</feature>
<feature type="binding site" evidence="1">
    <location>
        <begin position="12"/>
        <end position="17"/>
    </location>
    <ligand>
        <name>substrate</name>
    </ligand>
</feature>
<feature type="site" description="Interaction with substrate tRNA" evidence="1">
    <location>
        <position position="101"/>
    </location>
</feature>
<feature type="site" description="Interaction with substrate tRNA" evidence="1">
    <location>
        <position position="127"/>
    </location>
</feature>
<dbReference type="EC" id="2.5.1.75" evidence="1"/>
<dbReference type="EMBL" id="CP000408">
    <property type="protein sequence ID" value="ABP92491.1"/>
    <property type="molecule type" value="Genomic_DNA"/>
</dbReference>
<dbReference type="SMR" id="A4W2A2"/>
<dbReference type="KEGG" id="ssv:SSU98_1333"/>
<dbReference type="HOGENOM" id="CLU_032616_0_1_9"/>
<dbReference type="GO" id="GO:0005524">
    <property type="term" value="F:ATP binding"/>
    <property type="evidence" value="ECO:0007669"/>
    <property type="project" value="UniProtKB-UniRule"/>
</dbReference>
<dbReference type="GO" id="GO:0052381">
    <property type="term" value="F:tRNA dimethylallyltransferase activity"/>
    <property type="evidence" value="ECO:0007669"/>
    <property type="project" value="UniProtKB-UniRule"/>
</dbReference>
<dbReference type="GO" id="GO:0006400">
    <property type="term" value="P:tRNA modification"/>
    <property type="evidence" value="ECO:0007669"/>
    <property type="project" value="TreeGrafter"/>
</dbReference>
<dbReference type="Gene3D" id="3.40.50.300">
    <property type="entry name" value="P-loop containing nucleotide triphosphate hydrolases"/>
    <property type="match status" value="1"/>
</dbReference>
<dbReference type="HAMAP" id="MF_00185">
    <property type="entry name" value="IPP_trans"/>
    <property type="match status" value="1"/>
</dbReference>
<dbReference type="InterPro" id="IPR039657">
    <property type="entry name" value="Dimethylallyltransferase"/>
</dbReference>
<dbReference type="InterPro" id="IPR018022">
    <property type="entry name" value="IPT"/>
</dbReference>
<dbReference type="InterPro" id="IPR027417">
    <property type="entry name" value="P-loop_NTPase"/>
</dbReference>
<dbReference type="NCBIfam" id="TIGR00174">
    <property type="entry name" value="miaA"/>
    <property type="match status" value="1"/>
</dbReference>
<dbReference type="PANTHER" id="PTHR11088">
    <property type="entry name" value="TRNA DIMETHYLALLYLTRANSFERASE"/>
    <property type="match status" value="1"/>
</dbReference>
<dbReference type="PANTHER" id="PTHR11088:SF60">
    <property type="entry name" value="TRNA DIMETHYLALLYLTRANSFERASE"/>
    <property type="match status" value="1"/>
</dbReference>
<dbReference type="Pfam" id="PF01715">
    <property type="entry name" value="IPPT"/>
    <property type="match status" value="1"/>
</dbReference>
<dbReference type="SUPFAM" id="SSF52540">
    <property type="entry name" value="P-loop containing nucleoside triphosphate hydrolases"/>
    <property type="match status" value="1"/>
</dbReference>
<reference key="1">
    <citation type="journal article" date="2007" name="PLoS ONE">
        <title>A glimpse of streptococcal toxic shock syndrome from comparative genomics of S. suis 2 Chinese isolates.</title>
        <authorList>
            <person name="Chen C."/>
            <person name="Tang J."/>
            <person name="Dong W."/>
            <person name="Wang C."/>
            <person name="Feng Y."/>
            <person name="Wang J."/>
            <person name="Zheng F."/>
            <person name="Pan X."/>
            <person name="Liu D."/>
            <person name="Li M."/>
            <person name="Song Y."/>
            <person name="Zhu X."/>
            <person name="Sun H."/>
            <person name="Feng T."/>
            <person name="Guo Z."/>
            <person name="Ju A."/>
            <person name="Ge J."/>
            <person name="Dong Y."/>
            <person name="Sun W."/>
            <person name="Jiang Y."/>
            <person name="Wang J."/>
            <person name="Yan J."/>
            <person name="Yang H."/>
            <person name="Wang X."/>
            <person name="Gao G.F."/>
            <person name="Yang R."/>
            <person name="Wang J."/>
            <person name="Yu J."/>
        </authorList>
    </citation>
    <scope>NUCLEOTIDE SEQUENCE [LARGE SCALE GENOMIC DNA]</scope>
    <source>
        <strain>98HAH33</strain>
    </source>
</reference>
<organism>
    <name type="scientific">Streptococcus suis (strain 98HAH33)</name>
    <dbReference type="NCBI Taxonomy" id="391296"/>
    <lineage>
        <taxon>Bacteria</taxon>
        <taxon>Bacillati</taxon>
        <taxon>Bacillota</taxon>
        <taxon>Bacilli</taxon>
        <taxon>Lactobacillales</taxon>
        <taxon>Streptococcaceae</taxon>
        <taxon>Streptococcus</taxon>
    </lineage>
</organism>
<proteinExistence type="inferred from homology"/>
<comment type="function">
    <text evidence="1">Catalyzes the transfer of a dimethylallyl group onto the adenine at position 37 in tRNAs that read codons beginning with uridine, leading to the formation of N6-(dimethylallyl)adenosine (i(6)A).</text>
</comment>
<comment type="catalytic activity">
    <reaction evidence="1">
        <text>adenosine(37) in tRNA + dimethylallyl diphosphate = N(6)-dimethylallyladenosine(37) in tRNA + diphosphate</text>
        <dbReference type="Rhea" id="RHEA:26482"/>
        <dbReference type="Rhea" id="RHEA-COMP:10162"/>
        <dbReference type="Rhea" id="RHEA-COMP:10375"/>
        <dbReference type="ChEBI" id="CHEBI:33019"/>
        <dbReference type="ChEBI" id="CHEBI:57623"/>
        <dbReference type="ChEBI" id="CHEBI:74411"/>
        <dbReference type="ChEBI" id="CHEBI:74415"/>
        <dbReference type="EC" id="2.5.1.75"/>
    </reaction>
</comment>
<comment type="cofactor">
    <cofactor evidence="1">
        <name>Mg(2+)</name>
        <dbReference type="ChEBI" id="CHEBI:18420"/>
    </cofactor>
</comment>
<comment type="subunit">
    <text evidence="1">Monomer.</text>
</comment>
<comment type="similarity">
    <text evidence="1">Belongs to the IPP transferase family.</text>
</comment>
<evidence type="ECO:0000255" key="1">
    <source>
        <dbReference type="HAMAP-Rule" id="MF_00185"/>
    </source>
</evidence>
<name>MIAA_STRS2</name>
<protein>
    <recommendedName>
        <fullName evidence="1">tRNA dimethylallyltransferase</fullName>
        <ecNumber evidence="1">2.5.1.75</ecNumber>
    </recommendedName>
    <alternativeName>
        <fullName evidence="1">Dimethylallyl diphosphate:tRNA dimethylallyltransferase</fullName>
        <shortName evidence="1">DMAPP:tRNA dimethylallyltransferase</shortName>
        <shortName evidence="1">DMATase</shortName>
    </alternativeName>
    <alternativeName>
        <fullName evidence="1">Isopentenyl-diphosphate:tRNA isopentenyltransferase</fullName>
        <shortName evidence="1">IPP transferase</shortName>
        <shortName evidence="1">IPPT</shortName>
        <shortName evidence="1">IPTase</shortName>
    </alternativeName>
</protein>
<gene>
    <name evidence="1" type="primary">miaA</name>
    <name type="ordered locus">SSU98_1333</name>
</gene>
<accession>A4W2A2</accession>
<keyword id="KW-0067">ATP-binding</keyword>
<keyword id="KW-0460">Magnesium</keyword>
<keyword id="KW-0547">Nucleotide-binding</keyword>
<keyword id="KW-0808">Transferase</keyword>
<keyword id="KW-0819">tRNA processing</keyword>
<sequence>MKTKVIVVIGPTAVGKTALGIDLAQRYNGEIISGDSQQVYRKLDIGTAKASPEEQAAAVHHLIDVRDVTEGYSAYEFVAEAKALIADIKSRGKLPIIVGGTGLYIQSLLEGYHLGGLVDQEQVLAYRAELDCLSDEDLETMAEQAGLMVEGNSRRRIIRGLELKKFGENLENTESGYEPLYICLTDDRQVLYDRINQRVDKMMAAGLLDEVSWLYQEHPEAQAAMGIGYKEFFPYLEGQISLKEAIDNVKQNSRRFAKRQLTWFRNRMAVDFYQVSEEAVKDRIYTAVEEFLDD</sequence>